<protein>
    <recommendedName>
        <fullName>Protein C-ets-1</fullName>
    </recommendedName>
    <alternativeName>
        <fullName>p54</fullName>
    </alternativeName>
</protein>
<evidence type="ECO:0000250" key="1"/>
<evidence type="ECO:0000250" key="2">
    <source>
        <dbReference type="UniProtKB" id="P27577"/>
    </source>
</evidence>
<evidence type="ECO:0000255" key="3">
    <source>
        <dbReference type="PROSITE-ProRule" id="PRU00237"/>
    </source>
</evidence>
<evidence type="ECO:0000255" key="4">
    <source>
        <dbReference type="PROSITE-ProRule" id="PRU00762"/>
    </source>
</evidence>
<evidence type="ECO:0000269" key="5">
    <source>
    </source>
</evidence>
<evidence type="ECO:0000269" key="6">
    <source>
    </source>
</evidence>
<evidence type="ECO:0000269" key="7">
    <source>
    </source>
</evidence>
<evidence type="ECO:0000269" key="8">
    <source>
    </source>
</evidence>
<evidence type="ECO:0000269" key="9">
    <source>
    </source>
</evidence>
<evidence type="ECO:0000269" key="10">
    <source>
    </source>
</evidence>
<evidence type="ECO:0000269" key="11">
    <source>
    </source>
</evidence>
<evidence type="ECO:0000269" key="12">
    <source>
    </source>
</evidence>
<evidence type="ECO:0000303" key="13">
    <source>
    </source>
</evidence>
<evidence type="ECO:0000303" key="14">
    <source>
    </source>
</evidence>
<evidence type="ECO:0000303" key="15">
    <source>
    </source>
</evidence>
<evidence type="ECO:0000303" key="16">
    <source>
    </source>
</evidence>
<evidence type="ECO:0000305" key="17"/>
<evidence type="ECO:0007744" key="18">
    <source>
    </source>
</evidence>
<evidence type="ECO:0007744" key="19">
    <source>
    </source>
</evidence>
<evidence type="ECO:0007744" key="20">
    <source>
    </source>
</evidence>
<evidence type="ECO:0007744" key="21">
    <source>
    </source>
</evidence>
<evidence type="ECO:0007744" key="22">
    <source>
    </source>
</evidence>
<evidence type="ECO:0007744" key="23">
    <source>
    </source>
</evidence>
<evidence type="ECO:0007829" key="24">
    <source>
        <dbReference type="PDB" id="1GVJ"/>
    </source>
</evidence>
<evidence type="ECO:0007829" key="25">
    <source>
        <dbReference type="PDB" id="2STT"/>
    </source>
</evidence>
<evidence type="ECO:0007829" key="26">
    <source>
        <dbReference type="PDB" id="3WTS"/>
    </source>
</evidence>
<reference key="1">
    <citation type="journal article" date="1988" name="Oncogene Res.">
        <title>Structure, expression and alternative splicing of the human c-ets-1 proto-oncogene.</title>
        <authorList>
            <person name="Reddy E.S.P."/>
            <person name="Rao V.N."/>
        </authorList>
    </citation>
    <scope>NUCLEOTIDE SEQUENCE [MRNA]</scope>
</reference>
<reference key="2">
    <citation type="journal article" date="1988" name="Proc. Natl. Acad. Sci. U.S.A.">
        <title>Mammalian ets-1 and ets-2 genes encode highly conserved proteins.</title>
        <authorList>
            <person name="Watson D.K."/>
            <person name="McWilliams M.J."/>
            <person name="Lapis P."/>
            <person name="Lautenberger J.A."/>
            <person name="Schweinfest C.W."/>
            <person name="Papas T.S."/>
        </authorList>
    </citation>
    <scope>NUCLEOTIDE SEQUENCE [MRNA]</scope>
</reference>
<reference key="3">
    <citation type="journal article" date="2009" name="Oncogene">
        <title>Ets-1 p27: a novel Ets-1 isoform with dominant-negative effects on the transcriptional properties and the subcellular localization of Ets-1 p51.</title>
        <authorList>
            <person name="Laitem C."/>
            <person name="Leprivier G."/>
            <person name="Choul-Li S."/>
            <person name="Begue A."/>
            <person name="Monte D."/>
            <person name="Larsimont D."/>
            <person name="Dumont P."/>
            <person name="Duterque-Coquillaud M."/>
            <person name="Aumercier M."/>
        </authorList>
    </citation>
    <scope>NUCLEOTIDE SEQUENCE [MRNA] (ISOFORM ETS-1 P27)</scope>
    <scope>FUNCTION (ISOFORM ETS-1 P27)</scope>
    <scope>ALTERNATIVE SPLICING</scope>
    <scope>SUBCELLULAR LOCATION</scope>
    <scope>TISSUE SPECIFICITY</scope>
</reference>
<reference key="4">
    <citation type="submission" date="2003-05" db="EMBL/GenBank/DDBJ databases">
        <title>Cloning of human full-length CDSs in BD Creator(TM) system donor vector.</title>
        <authorList>
            <person name="Kalnine N."/>
            <person name="Chen X."/>
            <person name="Rolfs A."/>
            <person name="Halleck A."/>
            <person name="Hines L."/>
            <person name="Eisenstein S."/>
            <person name="Koundinya M."/>
            <person name="Raphael J."/>
            <person name="Moreira D."/>
            <person name="Kelley T."/>
            <person name="LaBaer J."/>
            <person name="Lin Y."/>
            <person name="Phelan M."/>
            <person name="Farmer A."/>
        </authorList>
    </citation>
    <scope>NUCLEOTIDE SEQUENCE [LARGE SCALE MRNA] (ISOFORM C-ETS-1A)</scope>
</reference>
<reference key="5">
    <citation type="journal article" date="2007" name="BMC Genomics">
        <title>The full-ORF clone resource of the German cDNA consortium.</title>
        <authorList>
            <person name="Bechtel S."/>
            <person name="Rosenfelder H."/>
            <person name="Duda A."/>
            <person name="Schmidt C.P."/>
            <person name="Ernst U."/>
            <person name="Wellenreuther R."/>
            <person name="Mehrle A."/>
            <person name="Schuster C."/>
            <person name="Bahr A."/>
            <person name="Bloecker H."/>
            <person name="Heubner D."/>
            <person name="Hoerlein A."/>
            <person name="Michel G."/>
            <person name="Wedler H."/>
            <person name="Koehrer K."/>
            <person name="Ottenwaelder B."/>
            <person name="Poustka A."/>
            <person name="Wiemann S."/>
            <person name="Schupp I."/>
        </authorList>
    </citation>
    <scope>NUCLEOTIDE SEQUENCE [LARGE SCALE MRNA] (ISOFORM 3)</scope>
    <source>
        <tissue>Endometrium</tissue>
    </source>
</reference>
<reference key="6">
    <citation type="journal article" date="2006" name="Nature">
        <title>Human chromosome 11 DNA sequence and analysis including novel gene identification.</title>
        <authorList>
            <person name="Taylor T.D."/>
            <person name="Noguchi H."/>
            <person name="Totoki Y."/>
            <person name="Toyoda A."/>
            <person name="Kuroki Y."/>
            <person name="Dewar K."/>
            <person name="Lloyd C."/>
            <person name="Itoh T."/>
            <person name="Takeda T."/>
            <person name="Kim D.-W."/>
            <person name="She X."/>
            <person name="Barlow K.F."/>
            <person name="Bloom T."/>
            <person name="Bruford E."/>
            <person name="Chang J.L."/>
            <person name="Cuomo C.A."/>
            <person name="Eichler E."/>
            <person name="FitzGerald M.G."/>
            <person name="Jaffe D.B."/>
            <person name="LaButti K."/>
            <person name="Nicol R."/>
            <person name="Park H.-S."/>
            <person name="Seaman C."/>
            <person name="Sougnez C."/>
            <person name="Yang X."/>
            <person name="Zimmer A.R."/>
            <person name="Zody M.C."/>
            <person name="Birren B.W."/>
            <person name="Nusbaum C."/>
            <person name="Fujiyama A."/>
            <person name="Hattori M."/>
            <person name="Rogers J."/>
            <person name="Lander E.S."/>
            <person name="Sakaki Y."/>
        </authorList>
    </citation>
    <scope>NUCLEOTIDE SEQUENCE [LARGE SCALE GENOMIC DNA]</scope>
</reference>
<reference key="7">
    <citation type="submission" date="2005-07" db="EMBL/GenBank/DDBJ databases">
        <authorList>
            <person name="Mural R.J."/>
            <person name="Istrail S."/>
            <person name="Sutton G."/>
            <person name="Florea L."/>
            <person name="Halpern A.L."/>
            <person name="Mobarry C.M."/>
            <person name="Lippert R."/>
            <person name="Walenz B."/>
            <person name="Shatkay H."/>
            <person name="Dew I."/>
            <person name="Miller J.R."/>
            <person name="Flanigan M.J."/>
            <person name="Edwards N.J."/>
            <person name="Bolanos R."/>
            <person name="Fasulo D."/>
            <person name="Halldorsson B.V."/>
            <person name="Hannenhalli S."/>
            <person name="Turner R."/>
            <person name="Yooseph S."/>
            <person name="Lu F."/>
            <person name="Nusskern D.R."/>
            <person name="Shue B.C."/>
            <person name="Zheng X.H."/>
            <person name="Zhong F."/>
            <person name="Delcher A.L."/>
            <person name="Huson D.H."/>
            <person name="Kravitz S.A."/>
            <person name="Mouchard L."/>
            <person name="Reinert K."/>
            <person name="Remington K.A."/>
            <person name="Clark A.G."/>
            <person name="Waterman M.S."/>
            <person name="Eichler E.E."/>
            <person name="Adams M.D."/>
            <person name="Hunkapiller M.W."/>
            <person name="Myers E.W."/>
            <person name="Venter J.C."/>
        </authorList>
    </citation>
    <scope>NUCLEOTIDE SEQUENCE [LARGE SCALE GENOMIC DNA]</scope>
</reference>
<reference key="8">
    <citation type="journal article" date="2004" name="Genome Res.">
        <title>The status, quality, and expansion of the NIH full-length cDNA project: the Mammalian Gene Collection (MGC).</title>
        <authorList>
            <consortium name="The MGC Project Team"/>
        </authorList>
    </citation>
    <scope>NUCLEOTIDE SEQUENCE [LARGE SCALE MRNA] (ISOFORM 5)</scope>
    <source>
        <tissue>Lung</tissue>
    </source>
</reference>
<reference key="9">
    <citation type="journal article" date="1992" name="Nucleic Acids Res.">
        <title>Serum, AP-1 and Ets-1 stimulate the human ets-1 promoter.</title>
        <authorList>
            <person name="Majerus M.-A."/>
            <person name="Bibollet-Ruche F."/>
            <person name="Telliez J.-B."/>
            <person name="Wasylyk B."/>
            <person name="Bailleul B."/>
        </authorList>
    </citation>
    <scope>NUCLEOTIDE SEQUENCE [GENOMIC DNA] OF 1-27</scope>
</reference>
<reference key="10">
    <citation type="journal article" date="1993" name="Leukemia">
        <title>Quantitative and qualitative variation of ETS-1 transcripts in hematologic malignancies.</title>
        <authorList>
            <person name="Collyn d'Hooghe M."/>
            <person name="Galiegue-Zouitina S."/>
            <person name="Szymiczek D."/>
            <person name="Lantoine D."/>
            <person name="Quief S."/>
            <person name="Loucheux-Lefebvre M.H."/>
            <person name="Kerckaert J.P."/>
        </authorList>
    </citation>
    <scope>NUCLEOTIDE SEQUENCE [MRNA] OF 146-174</scope>
</reference>
<reference key="11">
    <citation type="journal article" date="1985" name="Proc. Natl. Acad. Sci. U.S.A.">
        <title>The ets sequence from the transforming gene of avian erythroblastosis virus, E26, has unique domains on human chromosomes 11 and 21: both loci are transcriptionally active.</title>
        <authorList>
            <person name="Watson D.K."/>
            <person name="McWilliams-Smith M.J."/>
            <person name="Nunn M.F."/>
            <person name="Duesberg P.H."/>
            <person name="O'Brien S.J."/>
            <person name="Papas T.S."/>
        </authorList>
    </citation>
    <scope>NUCLEOTIDE SEQUENCE [GENOMIC DNA] OF 236-337</scope>
</reference>
<reference key="12">
    <citation type="journal article" date="1997" name="Oncogene">
        <title>Modulation of ETS-1 transcriptional activity by huUBC9, a ubiquitin-conjugating enzyme.</title>
        <authorList>
            <person name="Hahn S.L."/>
            <person name="Criqui-Filipe P."/>
            <person name="Wasylyk B."/>
        </authorList>
    </citation>
    <scope>INTERACTION WITH UBE2I</scope>
</reference>
<reference key="13">
    <citation type="journal article" date="2000" name="Oncogene">
        <title>EAP1/Daxx interacts with ETS1 and represses transcriptional activation of ETS1 target genes.</title>
        <authorList>
            <person name="Li R."/>
            <person name="Pei H."/>
            <person name="Watson D.K."/>
            <person name="Papas T.S."/>
        </authorList>
    </citation>
    <scope>FUNCTION</scope>
    <scope>INTERACTION WITH DAXX</scope>
</reference>
<reference key="14">
    <citation type="journal article" date="2002" name="Mol. Cell. Biol.">
        <title>Sp100 interacts with ETS-1 and stimulates its transcriptional activity.</title>
        <authorList>
            <person name="Wasylyk C."/>
            <person name="Schlumberger S.E."/>
            <person name="Criqui-Filipe P."/>
            <person name="Wasylyk B."/>
        </authorList>
    </citation>
    <scope>FUNCTION AS A TRANSCRIPTIONAL ACTIVATOR</scope>
    <scope>INTERACTION WITH SP100</scope>
    <scope>SUBCELLULAR LOCATION</scope>
    <scope>ACTIVATION DOMAIN</scope>
</reference>
<reference key="15">
    <citation type="journal article" date="2004" name="Oncogene">
        <title>SP100 expression modulates ETS1 transcriptional activity and inhibits cell invasion.</title>
        <authorList>
            <person name="Yordy J.S."/>
            <person name="Li R."/>
            <person name="Sementchenko V.I."/>
            <person name="Pei H."/>
            <person name="Muise-Helmericks R.C."/>
            <person name="Watson D.K."/>
        </authorList>
    </citation>
    <scope>FUNCTION AS A TRANSCRIPTIONAL ACTIVATOR</scope>
    <scope>INTERACTION WITH SP100</scope>
</reference>
<reference key="16">
    <citation type="journal article" date="2005" name="Nat. Biotechnol.">
        <title>Immunoaffinity profiling of tyrosine phosphorylation in cancer cells.</title>
        <authorList>
            <person name="Rush J."/>
            <person name="Moritz A."/>
            <person name="Lee K.A."/>
            <person name="Guo A."/>
            <person name="Goss V.L."/>
            <person name="Spek E.J."/>
            <person name="Zhang H."/>
            <person name="Zha X.-M."/>
            <person name="Polakiewicz R.D."/>
            <person name="Comb M.J."/>
        </authorList>
    </citation>
    <scope>PHOSPHORYLATION [LARGE SCALE ANALYSIS] AT TYR-223</scope>
    <scope>IDENTIFICATION BY MASS SPECTROMETRY [LARGE SCALE ANALYSIS]</scope>
</reference>
<reference key="17">
    <citation type="journal article" date="2005" name="Oncogene">
        <title>SP100 inhibits ETS1 activity in primary endothelial cells.</title>
        <authorList>
            <person name="Yordy J.S."/>
            <person name="Moussa O."/>
            <person name="Pei H."/>
            <person name="Chaussabel D."/>
            <person name="Li R."/>
            <person name="Watson D.K."/>
        </authorList>
    </citation>
    <scope>FUNCTION IN ENDOTHELIAL CELL MIGRATION</scope>
    <scope>INDUCTION</scope>
</reference>
<reference key="18">
    <citation type="journal article" date="2009" name="Sci. Signal.">
        <title>Quantitative phosphoproteomic analysis of T cell receptor signaling reveals system-wide modulation of protein-protein interactions.</title>
        <authorList>
            <person name="Mayya V."/>
            <person name="Lundgren D.H."/>
            <person name="Hwang S.-I."/>
            <person name="Rezaul K."/>
            <person name="Wu L."/>
            <person name="Eng J.K."/>
            <person name="Rodionov V."/>
            <person name="Han D.K."/>
        </authorList>
    </citation>
    <scope>PHOSPHORYLATION [LARGE SCALE ANALYSIS] AT SER-270 AND SER-285</scope>
    <scope>IDENTIFICATION BY MASS SPECTROMETRY [LARGE SCALE ANALYSIS]</scope>
    <source>
        <tissue>Leukemic T-cell</tissue>
    </source>
</reference>
<reference key="19">
    <citation type="journal article" date="2009" name="Science">
        <title>Lysine acetylation targets protein complexes and co-regulates major cellular functions.</title>
        <authorList>
            <person name="Choudhary C."/>
            <person name="Kumar C."/>
            <person name="Gnad F."/>
            <person name="Nielsen M.L."/>
            <person name="Rehman M."/>
            <person name="Walther T.C."/>
            <person name="Olsen J.V."/>
            <person name="Mann M."/>
        </authorList>
    </citation>
    <scope>ACETYLATION [LARGE SCALE ANALYSIS] AT LYS-8; LYS-15 AND LYS-305</scope>
    <scope>IDENTIFICATION BY MASS SPECTROMETRY [LARGE SCALE ANALYSIS]</scope>
</reference>
<reference key="20">
    <citation type="journal article" date="2010" name="Cytokine">
        <title>Transcription factor Ets-1 in cytokine and chemokine gene regulation.</title>
        <authorList>
            <person name="Russell L."/>
            <person name="Garrett-Sinha L.A."/>
        </authorList>
    </citation>
    <scope>REVIEW ON FUNCTION</scope>
    <scope>TISSUE SPECIFICITY</scope>
</reference>
<reference key="21">
    <citation type="journal article" date="2013" name="J. Proteome Res.">
        <title>Toward a comprehensive characterization of a human cancer cell phosphoproteome.</title>
        <authorList>
            <person name="Zhou H."/>
            <person name="Di Palma S."/>
            <person name="Preisinger C."/>
            <person name="Peng M."/>
            <person name="Polat A.N."/>
            <person name="Heck A.J."/>
            <person name="Mohammed S."/>
        </authorList>
    </citation>
    <scope>PHOSPHORYLATION [LARGE SCALE ANALYSIS] AT SER-251; THR-265 AND SER-267</scope>
    <scope>IDENTIFICATION BY MASS SPECTROMETRY [LARGE SCALE ANALYSIS]</scope>
    <source>
        <tissue>Erythroleukemia</tissue>
    </source>
</reference>
<reference key="22">
    <citation type="journal article" date="2015" name="Mol. Cell. Proteomics">
        <title>System-wide analysis of SUMOylation dynamics in response to replication stress reveals novel small ubiquitin-like modified target proteins and acceptor lysines relevant for genome stability.</title>
        <authorList>
            <person name="Xiao Z."/>
            <person name="Chang J.G."/>
            <person name="Hendriks I.A."/>
            <person name="Sigurdsson J.O."/>
            <person name="Olsen J.V."/>
            <person name="Vertegaal A.C."/>
        </authorList>
    </citation>
    <scope>SUMOYLATION [LARGE SCALE ANALYSIS] AT LYS-15</scope>
    <scope>IDENTIFICATION BY MASS SPECTROMETRY [LARGE SCALE ANALYSIS]</scope>
</reference>
<reference key="23">
    <citation type="journal article" date="2017" name="Nat. Struct. Mol. Biol.">
        <title>Site-specific mapping of the human SUMO proteome reveals co-modification with phosphorylation.</title>
        <authorList>
            <person name="Hendriks I.A."/>
            <person name="Lyon D."/>
            <person name="Young C."/>
            <person name="Jensen L.J."/>
            <person name="Vertegaal A.C."/>
            <person name="Nielsen M.L."/>
        </authorList>
    </citation>
    <scope>SUMOYLATION [LARGE SCALE ANALYSIS] AT LYS-8; LYS-15 AND LYS-138</scope>
    <scope>IDENTIFICATION BY MASS SPECTROMETRY [LARGE SCALE ANALYSIS]</scope>
</reference>
<reference key="24">
    <citation type="journal article" date="1995" name="Cell">
        <title>The solution structure of the human ETS1-DNA complex reveals a novel mode of binding and true side chain intercalation.</title>
        <authorList>
            <person name="Werner M.H."/>
            <person name="Clore G.M."/>
            <person name="Fisher C.L."/>
            <person name="Fisher R.J."/>
            <person name="Trinh L."/>
            <person name="Shiloach J."/>
            <person name="Gronenborn A.M."/>
        </authorList>
    </citation>
    <scope>STRUCTURE BY NMR OF 320-415</scope>
</reference>
<reference key="25">
    <citation type="journal article" date="2008" name="EMBO J.">
        <title>Regulation of the transcription factor Ets-1 by DNA-mediated homo-dimerization.</title>
        <authorList>
            <person name="Lamber E.P."/>
            <person name="Vanhille L."/>
            <person name="Textor L.C."/>
            <person name="Kachalova G.S."/>
            <person name="Sieweke M.H."/>
            <person name="Wilmanns M."/>
        </authorList>
    </citation>
    <scope>X-RAY CRYSTALLOGRAPHY (2.58 ANGSTROMS) OF 280-441 IN COMPLEX WITH DNA</scope>
    <scope>SUBUNIT</scope>
</reference>
<feature type="chain" id="PRO_0000204069" description="Protein C-ets-1">
    <location>
        <begin position="1"/>
        <end position="441"/>
    </location>
</feature>
<feature type="domain" description="PNT" evidence="4">
    <location>
        <begin position="51"/>
        <end position="136"/>
    </location>
</feature>
<feature type="DNA-binding region" description="ETS" evidence="3">
    <location>
        <begin position="335"/>
        <end position="415"/>
    </location>
</feature>
<feature type="region of interest" description="Activation domain; required for transcription activation" evidence="6">
    <location>
        <begin position="130"/>
        <end position="243"/>
    </location>
</feature>
<feature type="region of interest" description="Helix HI-1" evidence="2">
    <location>
        <begin position="304"/>
        <end position="312"/>
    </location>
</feature>
<feature type="region of interest" description="Helix HI-2" evidence="2">
    <location>
        <begin position="323"/>
        <end position="330"/>
    </location>
</feature>
<feature type="region of interest" description="Helix H4" evidence="2">
    <location>
        <begin position="418"/>
        <end position="422"/>
    </location>
</feature>
<feature type="region of interest" description="Helix H5" evidence="2">
    <location>
        <begin position="426"/>
        <end position="432"/>
    </location>
</feature>
<feature type="modified residue" description="N6-acetyllysine; alternate" evidence="19">
    <location>
        <position position="8"/>
    </location>
</feature>
<feature type="modified residue" description="N6-acetyllysine; alternate" evidence="19">
    <location>
        <position position="15"/>
    </location>
</feature>
<feature type="modified residue" description="Phosphothreonine; by MAPK" evidence="2">
    <location>
        <position position="38"/>
    </location>
</feature>
<feature type="modified residue" description="Phosphotyrosine" evidence="18">
    <location>
        <position position="223"/>
    </location>
</feature>
<feature type="modified residue" description="Phosphoserine" evidence="21">
    <location>
        <position position="251"/>
    </location>
</feature>
<feature type="modified residue" description="Phosphoserine" evidence="2">
    <location>
        <position position="254"/>
    </location>
</feature>
<feature type="modified residue" description="Phosphothreonine" evidence="21">
    <location>
        <position position="265"/>
    </location>
</feature>
<feature type="modified residue" description="Phosphoserine" evidence="21">
    <location>
        <position position="267"/>
    </location>
</feature>
<feature type="modified residue" description="Phosphoserine" evidence="20">
    <location>
        <position position="270"/>
    </location>
</feature>
<feature type="modified residue" description="Phosphoserine" evidence="2">
    <location>
        <position position="282"/>
    </location>
</feature>
<feature type="modified residue" description="Phosphoserine" evidence="20">
    <location>
        <position position="285"/>
    </location>
</feature>
<feature type="modified residue" description="N6-acetyllysine" evidence="19">
    <location>
        <position position="305"/>
    </location>
</feature>
<feature type="cross-link" description="Glycyl lysine isopeptide (Lys-Gly) (interchain with G-Cter in SUMO2); alternate" evidence="23">
    <location>
        <position position="8"/>
    </location>
</feature>
<feature type="cross-link" description="Glycyl lysine isopeptide (Lys-Gly) (interchain with G-Cter in SUMO2); alternate" evidence="22 23">
    <location>
        <position position="15"/>
    </location>
</feature>
<feature type="cross-link" description="Glycyl lysine isopeptide (Lys-Gly) (interchain with G-Cter in SUMO2)" evidence="23">
    <location>
        <position position="138"/>
    </location>
</feature>
<feature type="cross-link" description="Glycyl lysine isopeptide (Lys-Gly) (interchain with G-Cter in SUMO)" evidence="1">
    <location>
        <position position="227"/>
    </location>
</feature>
<feature type="splice variant" id="VSP_043152" description="In isoform 3." evidence="14">
    <original>MKAAVDLKPTLTIIKTEKVDLELFPSP</original>
    <variation>MSYFVDSAGSSPVPYSAPRPAVVRQGPSNTYEDPRMNCGFQSNYHQQRPCYPFWDEMATQEVPTGLEHCVS</variation>
    <location>
        <begin position="1"/>
        <end position="27"/>
    </location>
</feature>
<feature type="splice variant" id="VSP_046056" description="In isoform Ets-1 p27." evidence="15">
    <location>
        <begin position="28"/>
        <end position="243"/>
    </location>
</feature>
<feature type="splice variant" id="VSP_001464" description="In isoform c-ETS-1B." evidence="17">
    <location>
        <begin position="244"/>
        <end position="330"/>
    </location>
</feature>
<feature type="splice variant" id="VSP_055485" description="In isoform 5." evidence="13">
    <original>DRLTQSWSSQS</original>
    <variation>GQEMGKEEKQT</variation>
    <location>
        <begin position="262"/>
        <end position="272"/>
    </location>
</feature>
<feature type="splice variant" id="VSP_055486" description="In isoform 5." evidence="13">
    <location>
        <begin position="273"/>
        <end position="441"/>
    </location>
</feature>
<feature type="sequence conflict" description="In Ref. 10; AAB28747." evidence="17" ref="10">
    <original>Y</original>
    <variation>C</variation>
    <location>
        <position position="162"/>
    </location>
</feature>
<feature type="sequence conflict" description="In Ref. 11; AAA52409." evidence="17" ref="11">
    <original>MCMGRTSR</original>
    <variation>FLPPPLPP</variation>
    <location>
        <begin position="236"/>
        <end position="243"/>
    </location>
</feature>
<feature type="sequence conflict" description="In Ref. 3; AAY19514." evidence="17" ref="3">
    <original>I</original>
    <variation>V</variation>
    <location>
        <position position="255"/>
    </location>
</feature>
<feature type="sequence conflict" description="In Ref. 11; AAA52409." evidence="17" ref="11">
    <original>SGPIQL</original>
    <variation>RRPPAA</variation>
    <location>
        <begin position="332"/>
        <end position="337"/>
    </location>
</feature>
<feature type="helix" evidence="24">
    <location>
        <begin position="304"/>
        <end position="313"/>
    </location>
</feature>
<feature type="helix" evidence="24">
    <location>
        <begin position="323"/>
        <end position="330"/>
    </location>
</feature>
<feature type="strand" evidence="26">
    <location>
        <begin position="331"/>
        <end position="334"/>
    </location>
</feature>
<feature type="helix" evidence="24">
    <location>
        <begin position="337"/>
        <end position="345"/>
    </location>
</feature>
<feature type="helix" evidence="24">
    <location>
        <begin position="348"/>
        <end position="350"/>
    </location>
</feature>
<feature type="turn" evidence="24">
    <location>
        <begin position="351"/>
        <end position="353"/>
    </location>
</feature>
<feature type="strand" evidence="24">
    <location>
        <begin position="354"/>
        <end position="356"/>
    </location>
</feature>
<feature type="strand" evidence="25">
    <location>
        <begin position="358"/>
        <end position="361"/>
    </location>
</feature>
<feature type="strand" evidence="24">
    <location>
        <begin position="362"/>
        <end position="364"/>
    </location>
</feature>
<feature type="helix" evidence="24">
    <location>
        <begin position="368"/>
        <end position="379"/>
    </location>
</feature>
<feature type="helix" evidence="24">
    <location>
        <begin position="386"/>
        <end position="395"/>
    </location>
</feature>
<feature type="turn" evidence="24">
    <location>
        <begin position="396"/>
        <end position="400"/>
    </location>
</feature>
<feature type="strand" evidence="24">
    <location>
        <begin position="401"/>
        <end position="404"/>
    </location>
</feature>
<feature type="strand" evidence="24">
    <location>
        <begin position="408"/>
        <end position="414"/>
    </location>
</feature>
<feature type="helix" evidence="24">
    <location>
        <begin position="418"/>
        <end position="422"/>
    </location>
</feature>
<feature type="helix" evidence="24">
    <location>
        <begin position="426"/>
        <end position="432"/>
    </location>
</feature>
<name>ETS1_HUMAN</name>
<organism>
    <name type="scientific">Homo sapiens</name>
    <name type="common">Human</name>
    <dbReference type="NCBI Taxonomy" id="9606"/>
    <lineage>
        <taxon>Eukaryota</taxon>
        <taxon>Metazoa</taxon>
        <taxon>Chordata</taxon>
        <taxon>Craniata</taxon>
        <taxon>Vertebrata</taxon>
        <taxon>Euteleostomi</taxon>
        <taxon>Mammalia</taxon>
        <taxon>Eutheria</taxon>
        <taxon>Euarchontoglires</taxon>
        <taxon>Primates</taxon>
        <taxon>Haplorrhini</taxon>
        <taxon>Catarrhini</taxon>
        <taxon>Hominidae</taxon>
        <taxon>Homo</taxon>
    </lineage>
</organism>
<comment type="function">
    <text evidence="5 6 7 8 16">Transcription factor (PubMed:10698492, PubMed:11909962). Directly controls the expression of cytokine and chemokine genes in a wide variety of different cellular contexts (PubMed:20378371). May control the differentiation, survival and proliferation of lymphoid cells (PubMed:20378371). May also regulate angiogenesis through regulation of expression of genes controlling endothelial cell migration and invasion (PubMed:15247905, PubMed:15592518).</text>
</comment>
<comment type="function">
    <molecule>Isoform Ets-1 p27</molecule>
    <text evidence="10">Acts as a dominant-negative for isoform c-ETS-1A.</text>
</comment>
<comment type="activity regulation">
    <text evidence="2">Autoinhibited by a module composed of four alpha helices (HI-1, HI-2, H4, and H5) that flank the DNA-binding ETS domain, reducing the affinity for DNA. Phosphorylation by CaMK2/CaMKII in response to calcium signaling decreases affinity for DNA.</text>
</comment>
<comment type="subunit">
    <text evidence="2 5 6 7 9 12">Binds DNA as a homodimer; homodimerization is required for transcription activation (PubMed:18566588). Interacts with MAF and MAFB (By similarity). Interacts with PAX5; the interaction alters DNA-binding properties (By similarity). Interacts with DAXX (PubMed:10698492). Interacts with UBE2I (PubMed:9333025). Interacts with SP100; the interaction is direct and modulates ETS1 transcriptional activity (PubMed:11909962, PubMed:15247905).</text>
</comment>
<comment type="interaction">
    <interactant intactId="EBI-913209">
        <id>P14921</id>
    </interactant>
    <interactant intactId="EBI-79306">
        <id>Q06481</id>
        <label>APLP2</label>
    </interactant>
    <organismsDiffer>false</organismsDiffer>
    <experiments>2</experiments>
</comment>
<comment type="interaction">
    <interactant intactId="EBI-913209">
        <id>P14921</id>
    </interactant>
    <interactant intactId="EBI-2680990">
        <id>Q4LE39</id>
        <label>ARID4B</label>
    </interactant>
    <organismsDiffer>false</organismsDiffer>
    <experiments>2</experiments>
</comment>
<comment type="interaction">
    <interactant intactId="EBI-913209">
        <id>P14921</id>
    </interactant>
    <interactant intactId="EBI-2680384">
        <id>Q9BQA9</id>
        <label>CYBC1</label>
    </interactant>
    <organismsDiffer>false</organismsDiffer>
    <experiments>3</experiments>
</comment>
<comment type="interaction">
    <interactant intactId="EBI-913209">
        <id>P14921</id>
    </interactant>
    <interactant intactId="EBI-928530">
        <id>O60841</id>
        <label>EIF5B</label>
    </interactant>
    <organismsDiffer>false</organismsDiffer>
    <experiments>2</experiments>
</comment>
<comment type="interaction">
    <interactant intactId="EBI-913209">
        <id>P14921</id>
    </interactant>
    <interactant intactId="EBI-913209">
        <id>P14921</id>
        <label>ETS1</label>
    </interactant>
    <organismsDiffer>false</organismsDiffer>
    <experiments>2</experiments>
</comment>
<comment type="interaction">
    <interactant intactId="EBI-913209">
        <id>P14921</id>
    </interactant>
    <interactant intactId="EBI-852823">
        <id>P05412</id>
        <label>JUN</label>
    </interactant>
    <organismsDiffer>false</organismsDiffer>
    <experiments>3</experiments>
</comment>
<comment type="interaction">
    <interactant intactId="EBI-913209">
        <id>P14921</id>
    </interactant>
    <interactant intactId="EBI-1210694">
        <id>O00470</id>
        <label>MEIS1</label>
    </interactant>
    <organismsDiffer>false</organismsDiffer>
    <experiments>2</experiments>
</comment>
<comment type="interaction">
    <interactant intactId="EBI-913209">
        <id>P14921</id>
    </interactant>
    <interactant intactId="EBI-352053">
        <id>P78527</id>
        <label>PRKDC</label>
    </interactant>
    <organismsDiffer>false</organismsDiffer>
    <experiments>2</experiments>
</comment>
<comment type="interaction">
    <interactant intactId="EBI-913209">
        <id>P14921</id>
    </interactant>
    <interactant intactId="EBI-751145">
        <id>P23497</id>
        <label>SP100</label>
    </interactant>
    <organismsDiffer>false</organismsDiffer>
    <experiments>4</experiments>
</comment>
<comment type="interaction">
    <interactant intactId="EBI-913209">
        <id>P14921</id>
    </interactant>
    <interactant intactId="EBI-1051785">
        <id>Q05519</id>
        <label>SRSF11</label>
    </interactant>
    <organismsDiffer>false</organismsDiffer>
    <experiments>2</experiments>
</comment>
<comment type="interaction">
    <interactant intactId="EBI-913209">
        <id>P14921</id>
    </interactant>
    <interactant intactId="EBI-1753878">
        <id>P17542</id>
        <label>TAL1</label>
    </interactant>
    <organismsDiffer>false</organismsDiffer>
    <experiments>2</experiments>
</comment>
<comment type="interaction">
    <interactant intactId="EBI-913209">
        <id>P14921</id>
    </interactant>
    <interactant intactId="EBI-3954754">
        <id>P70338</id>
        <label>Gfi1</label>
    </interactant>
    <organismsDiffer>true</organismsDiffer>
    <experiments>2</experiments>
</comment>
<comment type="interaction">
    <interactant intactId="EBI-913224">
        <id>P14921-1</id>
    </interactant>
    <interactant intactId="EBI-1176214">
        <id>Q8NHY2</id>
        <label>COP1</label>
    </interactant>
    <organismsDiffer>false</organismsDiffer>
    <experiments>3</experiments>
</comment>
<comment type="interaction">
    <interactant intactId="EBI-913224">
        <id>P14921-1</id>
    </interactant>
    <interactant intactId="EBI-287635">
        <id>Q9UER7-1</id>
        <label>DAXX</label>
    </interactant>
    <organismsDiffer>false</organismsDiffer>
    <experiments>3</experiments>
</comment>
<comment type="interaction">
    <interactant intactId="EBI-913224">
        <id>P14921-1</id>
    </interactant>
    <interactant intactId="EBI-621482">
        <id>P12931</id>
        <label>SRC</label>
    </interactant>
    <organismsDiffer>false</organismsDiffer>
    <experiments>2</experiments>
</comment>
<comment type="interaction">
    <interactant intactId="EBI-913228">
        <id>P14921-2</id>
    </interactant>
    <interactant intactId="EBI-287635">
        <id>Q9UER7-1</id>
        <label>DAXX</label>
    </interactant>
    <organismsDiffer>false</organismsDiffer>
    <experiments>2</experiments>
</comment>
<comment type="interaction">
    <interactant intactId="EBI-21403286">
        <id>P14921-3</id>
    </interactant>
    <interactant intactId="EBI-1108782">
        <id>Q12778</id>
        <label>FOXO1</label>
    </interactant>
    <organismsDiffer>false</organismsDiffer>
    <experiments>2</experiments>
</comment>
<comment type="subcellular location">
    <subcellularLocation>
        <location evidence="6 10">Nucleus</location>
    </subcellularLocation>
    <subcellularLocation>
        <location evidence="10">Cytoplasm</location>
    </subcellularLocation>
    <text evidence="10">Delocalizes from nucleus to cytoplasm when coexpressed with isoform Ets-1 p27.</text>
</comment>
<comment type="alternative products">
    <event type="alternative splicing"/>
    <isoform>
        <id>P14921-1</id>
        <name>c-ETS-1A</name>
        <name>Ets-1 p51</name>
        <sequence type="displayed"/>
    </isoform>
    <isoform>
        <id>P14921-2</id>
        <name>c-ETS-1B</name>
        <name>Ets-1 p42</name>
        <sequence type="described" ref="VSP_001464"/>
    </isoform>
    <isoform>
        <id>P14921-3</id>
        <name>3</name>
        <sequence type="described" ref="VSP_043152"/>
    </isoform>
    <isoform>
        <id>P14921-4</id>
        <name>Ets-1 p27</name>
        <name>Ets-1Delta(III-VI)</name>
        <sequence type="described" ref="VSP_046056"/>
    </isoform>
    <isoform>
        <id>P14921-5</id>
        <name>5</name>
        <sequence type="described" ref="VSP_055485 VSP_055486"/>
    </isoform>
</comment>
<comment type="tissue specificity">
    <text evidence="10 11">Highly expressed within lymphoid cells. Isoforms c-ETS-1A and Ets-1 p27 are both detected in all fetal tissues tested, but vary with tissue type in adult tissues. None is detected in brain or kidney.</text>
</comment>
<comment type="induction">
    <text evidence="8">Up-regulated by retinoic acid, VEGF, TNF-alpha/TNFA, lipopolysaccharide and in response to hypoxia (at protein level).</text>
</comment>
<comment type="PTM">
    <text evidence="2">Sumoylated on Lys-15 and Lys-227, preferentially with SUMO2; which inhibits transcriptional activity.</text>
</comment>
<comment type="PTM">
    <text evidence="2">Ubiquitinated; which induces proteasomal degradation.</text>
</comment>
<comment type="PTM">
    <text evidence="2">Phosphorylation at Ser-251, Ser-282 and Ser-285 by CaMK2/CaMKII in response to calcium signaling decreases affinity for DNA: an increasing number of phosphoserines causes DNA-binding to become progressively weaker.</text>
</comment>
<comment type="similarity">
    <text evidence="17">Belongs to the ETS family.</text>
</comment>
<comment type="online information" name="Atlas of Genetics and Cytogenetics in Oncology and Haematology">
    <link uri="https://atlasgeneticsoncology.org/gene/40502/ETS1"/>
</comment>
<dbReference type="EMBL" id="X14798">
    <property type="protein sequence ID" value="CAA32904.1"/>
    <property type="molecule type" value="mRNA"/>
</dbReference>
<dbReference type="EMBL" id="X14798">
    <property type="protein sequence ID" value="CAA32903.1"/>
    <property type="molecule type" value="mRNA"/>
</dbReference>
<dbReference type="EMBL" id="J04101">
    <property type="protein sequence ID" value="AAA52410.1"/>
    <property type="molecule type" value="mRNA"/>
</dbReference>
<dbReference type="EMBL" id="X65469">
    <property type="status" value="NOT_ANNOTATED_CDS"/>
    <property type="molecule type" value="Genomic_DNA"/>
</dbReference>
<dbReference type="EMBL" id="S67063">
    <property type="protein sequence ID" value="AAB28747.1"/>
    <property type="molecule type" value="mRNA"/>
</dbReference>
<dbReference type="EMBL" id="AY943926">
    <property type="protein sequence ID" value="AAY19514.1"/>
    <property type="molecule type" value="mRNA"/>
</dbReference>
<dbReference type="EMBL" id="BT019452">
    <property type="protein sequence ID" value="AAV38259.1"/>
    <property type="molecule type" value="mRNA"/>
</dbReference>
<dbReference type="EMBL" id="BX640634">
    <property type="protein sequence ID" value="CAE45783.1"/>
    <property type="molecule type" value="mRNA"/>
</dbReference>
<dbReference type="EMBL" id="AP001995">
    <property type="status" value="NOT_ANNOTATED_CDS"/>
    <property type="molecule type" value="Genomic_DNA"/>
</dbReference>
<dbReference type="EMBL" id="AP003397">
    <property type="status" value="NOT_ANNOTATED_CDS"/>
    <property type="molecule type" value="Genomic_DNA"/>
</dbReference>
<dbReference type="EMBL" id="CH471065">
    <property type="protein sequence ID" value="EAW67709.1"/>
    <property type="molecule type" value="Genomic_DNA"/>
</dbReference>
<dbReference type="EMBL" id="BC017314">
    <property type="protein sequence ID" value="AAH17314.1"/>
    <property type="molecule type" value="mRNA"/>
</dbReference>
<dbReference type="EMBL" id="M11921">
    <property type="protein sequence ID" value="AAA52409.1"/>
    <property type="molecule type" value="Genomic_DNA"/>
</dbReference>
<dbReference type="CCDS" id="CCDS44767.1">
    <molecule id="P14921-3"/>
</dbReference>
<dbReference type="CCDS" id="CCDS53724.1">
    <molecule id="P14921-4"/>
</dbReference>
<dbReference type="CCDS" id="CCDS81648.1">
    <molecule id="P14921-2"/>
</dbReference>
<dbReference type="CCDS" id="CCDS8475.1">
    <molecule id="P14921-1"/>
</dbReference>
<dbReference type="PIR" id="A32066">
    <property type="entry name" value="TVHUET"/>
</dbReference>
<dbReference type="RefSeq" id="NP_001137292.1">
    <molecule id="P14921-3"/>
    <property type="nucleotide sequence ID" value="NM_001143820.2"/>
</dbReference>
<dbReference type="RefSeq" id="NP_001155894.1">
    <molecule id="P14921-4"/>
    <property type="nucleotide sequence ID" value="NM_001162422.2"/>
</dbReference>
<dbReference type="RefSeq" id="NP_001317380.1">
    <molecule id="P14921-2"/>
    <property type="nucleotide sequence ID" value="NM_001330451.2"/>
</dbReference>
<dbReference type="RefSeq" id="NP_005229.1">
    <molecule id="P14921-1"/>
    <property type="nucleotide sequence ID" value="NM_005238.4"/>
</dbReference>
<dbReference type="RefSeq" id="XP_016872803.1">
    <molecule id="P14921-3"/>
    <property type="nucleotide sequence ID" value="XM_017017314.2"/>
</dbReference>
<dbReference type="RefSeq" id="XP_054223945.1">
    <molecule id="P14921-3"/>
    <property type="nucleotide sequence ID" value="XM_054367970.1"/>
</dbReference>
<dbReference type="PDB" id="1GVJ">
    <property type="method" value="X-ray"/>
    <property type="resolution" value="1.53 A"/>
    <property type="chains" value="A/B=297-441"/>
</dbReference>
<dbReference type="PDB" id="2NNY">
    <property type="method" value="X-ray"/>
    <property type="resolution" value="2.58 A"/>
    <property type="chains" value="A/B=280-441"/>
</dbReference>
<dbReference type="PDB" id="2STT">
    <property type="method" value="NMR"/>
    <property type="chains" value="A=320-415"/>
</dbReference>
<dbReference type="PDB" id="2STW">
    <property type="method" value="NMR"/>
    <property type="chains" value="A=320-415"/>
</dbReference>
<dbReference type="PDB" id="3MFK">
    <property type="method" value="X-ray"/>
    <property type="resolution" value="3.00 A"/>
    <property type="chains" value="A/B=280-441"/>
</dbReference>
<dbReference type="PDB" id="3RI4">
    <property type="method" value="X-ray"/>
    <property type="resolution" value="3.00 A"/>
    <property type="chains" value="A/D=280-441"/>
</dbReference>
<dbReference type="PDB" id="3WTS">
    <property type="method" value="X-ray"/>
    <property type="resolution" value="2.35 A"/>
    <property type="chains" value="C/H=276-441"/>
</dbReference>
<dbReference type="PDB" id="3WTT">
    <property type="method" value="X-ray"/>
    <property type="resolution" value="2.35 A"/>
    <property type="chains" value="C/H=276-441"/>
</dbReference>
<dbReference type="PDB" id="3WTU">
    <property type="method" value="X-ray"/>
    <property type="resolution" value="2.70 A"/>
    <property type="chains" value="C/H=276-441"/>
</dbReference>
<dbReference type="PDB" id="3WTV">
    <property type="method" value="X-ray"/>
    <property type="resolution" value="2.70 A"/>
    <property type="chains" value="C/H=276-441"/>
</dbReference>
<dbReference type="PDB" id="3WTW">
    <property type="method" value="X-ray"/>
    <property type="resolution" value="2.90 A"/>
    <property type="chains" value="C/H=276-441"/>
</dbReference>
<dbReference type="PDB" id="3WTX">
    <property type="method" value="X-ray"/>
    <property type="resolution" value="2.80 A"/>
    <property type="chains" value="C/H=276-441"/>
</dbReference>
<dbReference type="PDB" id="3WTY">
    <property type="method" value="X-ray"/>
    <property type="resolution" value="2.70 A"/>
    <property type="chains" value="C/H=276-441"/>
</dbReference>
<dbReference type="PDB" id="3WTZ">
    <property type="method" value="X-ray"/>
    <property type="resolution" value="2.61 A"/>
    <property type="chains" value="A/B=276-441"/>
</dbReference>
<dbReference type="PDB" id="3WU0">
    <property type="method" value="X-ray"/>
    <property type="resolution" value="2.60 A"/>
    <property type="chains" value="A/B=276-441"/>
</dbReference>
<dbReference type="PDB" id="3WU1">
    <property type="method" value="X-ray"/>
    <property type="resolution" value="2.40 A"/>
    <property type="chains" value="B=333-441"/>
</dbReference>
<dbReference type="PDB" id="4L0Y">
    <property type="method" value="X-ray"/>
    <property type="resolution" value="2.50 A"/>
    <property type="chains" value="B=296-441"/>
</dbReference>
<dbReference type="PDB" id="4L0Z">
    <property type="method" value="X-ray"/>
    <property type="resolution" value="2.70 A"/>
    <property type="chains" value="B=296-441"/>
</dbReference>
<dbReference type="PDB" id="4L18">
    <property type="method" value="X-ray"/>
    <property type="resolution" value="2.30 A"/>
    <property type="chains" value="B/F=296-441"/>
</dbReference>
<dbReference type="PDB" id="4LG0">
    <property type="method" value="X-ray"/>
    <property type="resolution" value="2.19 A"/>
    <property type="chains" value="B=331-440"/>
</dbReference>
<dbReference type="PDB" id="5ZMC">
    <property type="method" value="X-ray"/>
    <property type="resolution" value="2.99 A"/>
    <property type="chains" value="B=331-441"/>
</dbReference>
<dbReference type="PDBsum" id="1GVJ"/>
<dbReference type="PDBsum" id="2NNY"/>
<dbReference type="PDBsum" id="2STT"/>
<dbReference type="PDBsum" id="2STW"/>
<dbReference type="PDBsum" id="3MFK"/>
<dbReference type="PDBsum" id="3RI4"/>
<dbReference type="PDBsum" id="3WTS"/>
<dbReference type="PDBsum" id="3WTT"/>
<dbReference type="PDBsum" id="3WTU"/>
<dbReference type="PDBsum" id="3WTV"/>
<dbReference type="PDBsum" id="3WTW"/>
<dbReference type="PDBsum" id="3WTX"/>
<dbReference type="PDBsum" id="3WTY"/>
<dbReference type="PDBsum" id="3WTZ"/>
<dbReference type="PDBsum" id="3WU0"/>
<dbReference type="PDBsum" id="3WU1"/>
<dbReference type="PDBsum" id="4L0Y"/>
<dbReference type="PDBsum" id="4L0Z"/>
<dbReference type="PDBsum" id="4L18"/>
<dbReference type="PDBsum" id="4LG0"/>
<dbReference type="PDBsum" id="5ZMC"/>
<dbReference type="BMRB" id="P14921"/>
<dbReference type="SMR" id="P14921"/>
<dbReference type="BioGRID" id="108414">
    <property type="interactions" value="110"/>
</dbReference>
<dbReference type="CORUM" id="P14921"/>
<dbReference type="DIP" id="DIP-35183N"/>
<dbReference type="FunCoup" id="P14921">
    <property type="interactions" value="3052"/>
</dbReference>
<dbReference type="IntAct" id="P14921">
    <property type="interactions" value="117"/>
</dbReference>
<dbReference type="MINT" id="P14921"/>
<dbReference type="STRING" id="9606.ENSP00000376436"/>
<dbReference type="MoonDB" id="P14921">
    <property type="type" value="Predicted"/>
</dbReference>
<dbReference type="GlyGen" id="P14921">
    <property type="glycosylation" value="1 site, 1 O-linked glycan (1 site)"/>
</dbReference>
<dbReference type="iPTMnet" id="P14921"/>
<dbReference type="PhosphoSitePlus" id="P14921"/>
<dbReference type="BioMuta" id="ETS1"/>
<dbReference type="DMDM" id="119641"/>
<dbReference type="CPTAC" id="CPTAC-1206"/>
<dbReference type="jPOST" id="P14921"/>
<dbReference type="MassIVE" id="P14921"/>
<dbReference type="PaxDb" id="9606-ENSP00000376436"/>
<dbReference type="PeptideAtlas" id="P14921"/>
<dbReference type="ProteomicsDB" id="24875"/>
<dbReference type="ProteomicsDB" id="53095">
    <molecule id="P14921-1"/>
</dbReference>
<dbReference type="ProteomicsDB" id="53096">
    <molecule id="P14921-2"/>
</dbReference>
<dbReference type="ProteomicsDB" id="53097">
    <molecule id="P14921-3"/>
</dbReference>
<dbReference type="ProteomicsDB" id="75952"/>
<dbReference type="Pumba" id="P14921"/>
<dbReference type="Antibodypedia" id="3750">
    <property type="antibodies" value="795 antibodies from 42 providers"/>
</dbReference>
<dbReference type="DNASU" id="2113"/>
<dbReference type="Ensembl" id="ENST00000319397.7">
    <molecule id="P14921-1"/>
    <property type="protein sequence ID" value="ENSP00000324578.5"/>
    <property type="gene ID" value="ENSG00000134954.14"/>
</dbReference>
<dbReference type="Ensembl" id="ENST00000392668.8">
    <molecule id="P14921-3"/>
    <property type="protein sequence ID" value="ENSP00000376436.3"/>
    <property type="gene ID" value="ENSG00000134954.14"/>
</dbReference>
<dbReference type="Ensembl" id="ENST00000526145.6">
    <molecule id="P14921-2"/>
    <property type="protein sequence ID" value="ENSP00000433500.1"/>
    <property type="gene ID" value="ENSG00000134954.14"/>
</dbReference>
<dbReference type="Ensembl" id="ENST00000531611.5">
    <molecule id="P14921-5"/>
    <property type="protein sequence ID" value="ENSP00000435666.1"/>
    <property type="gene ID" value="ENSG00000134954.14"/>
</dbReference>
<dbReference type="Ensembl" id="ENST00000535549.5">
    <molecule id="P14921-4"/>
    <property type="protein sequence ID" value="ENSP00000441430.1"/>
    <property type="gene ID" value="ENSG00000134954.14"/>
</dbReference>
<dbReference type="GeneID" id="2113"/>
<dbReference type="KEGG" id="hsa:2113"/>
<dbReference type="MANE-Select" id="ENST00000392668.8">
    <molecule id="P14921-3"/>
    <property type="protein sequence ID" value="ENSP00000376436.3"/>
    <property type="RefSeq nucleotide sequence ID" value="NM_001143820.2"/>
    <property type="RefSeq protein sequence ID" value="NP_001137292.1"/>
</dbReference>
<dbReference type="UCSC" id="uc001qej.3">
    <molecule id="P14921-1"/>
    <property type="organism name" value="human"/>
</dbReference>
<dbReference type="AGR" id="HGNC:3488"/>
<dbReference type="CTD" id="2113"/>
<dbReference type="DisGeNET" id="2113"/>
<dbReference type="GeneCards" id="ETS1"/>
<dbReference type="HGNC" id="HGNC:3488">
    <property type="gene designation" value="ETS1"/>
</dbReference>
<dbReference type="HPA" id="ENSG00000134954">
    <property type="expression patterns" value="Tissue enhanced (lymphoid)"/>
</dbReference>
<dbReference type="MalaCards" id="ETS1"/>
<dbReference type="MIM" id="164720">
    <property type="type" value="gene"/>
</dbReference>
<dbReference type="neXtProt" id="NX_P14921"/>
<dbReference type="OpenTargets" id="ENSG00000134954"/>
<dbReference type="Orphanet" id="536">
    <property type="disease" value="Systemic lupus erythematosus"/>
</dbReference>
<dbReference type="PharmGKB" id="PA27902"/>
<dbReference type="VEuPathDB" id="HostDB:ENSG00000134954"/>
<dbReference type="eggNOG" id="KOG3806">
    <property type="taxonomic scope" value="Eukaryota"/>
</dbReference>
<dbReference type="GeneTree" id="ENSGT00940000159519"/>
<dbReference type="HOGENOM" id="CLU_1229532_0_0_1"/>
<dbReference type="InParanoid" id="P14921"/>
<dbReference type="OMA" id="DPWMTCG"/>
<dbReference type="OrthoDB" id="10067219at2759"/>
<dbReference type="PAN-GO" id="P14921">
    <property type="GO annotations" value="4 GO annotations based on evolutionary models"/>
</dbReference>
<dbReference type="PhylomeDB" id="P14921"/>
<dbReference type="TreeFam" id="TF316214"/>
<dbReference type="PathwayCommons" id="P14921"/>
<dbReference type="Reactome" id="R-HSA-2559585">
    <property type="pathway name" value="Oncogene Induced Senescence"/>
</dbReference>
<dbReference type="SignaLink" id="P14921"/>
<dbReference type="SIGNOR" id="P14921"/>
<dbReference type="BioGRID-ORCS" id="2113">
    <property type="hits" value="27 hits in 1191 CRISPR screens"/>
</dbReference>
<dbReference type="ChiTaRS" id="ETS1">
    <property type="organism name" value="human"/>
</dbReference>
<dbReference type="EvolutionaryTrace" id="P14921"/>
<dbReference type="GeneWiki" id="ETS1"/>
<dbReference type="GenomeRNAi" id="2113"/>
<dbReference type="Pharos" id="P14921">
    <property type="development level" value="Tbio"/>
</dbReference>
<dbReference type="PRO" id="PR:P14921"/>
<dbReference type="Proteomes" id="UP000005640">
    <property type="component" value="Chromosome 11"/>
</dbReference>
<dbReference type="RNAct" id="P14921">
    <property type="molecule type" value="protein"/>
</dbReference>
<dbReference type="Bgee" id="ENSG00000134954">
    <property type="expression patterns" value="Expressed in visceral pleura and 182 other cell types or tissues"/>
</dbReference>
<dbReference type="ExpressionAtlas" id="P14921">
    <property type="expression patterns" value="baseline and differential"/>
</dbReference>
<dbReference type="GO" id="GO:0000785">
    <property type="term" value="C:chromatin"/>
    <property type="evidence" value="ECO:0000247"/>
    <property type="project" value="NTNU_SB"/>
</dbReference>
<dbReference type="GO" id="GO:0005737">
    <property type="term" value="C:cytoplasm"/>
    <property type="evidence" value="ECO:0007669"/>
    <property type="project" value="UniProtKB-SubCell"/>
</dbReference>
<dbReference type="GO" id="GO:0005654">
    <property type="term" value="C:nucleoplasm"/>
    <property type="evidence" value="ECO:0000314"/>
    <property type="project" value="HPA"/>
</dbReference>
<dbReference type="GO" id="GO:0005634">
    <property type="term" value="C:nucleus"/>
    <property type="evidence" value="ECO:0000314"/>
    <property type="project" value="BHF-UCL"/>
</dbReference>
<dbReference type="GO" id="GO:0003677">
    <property type="term" value="F:DNA binding"/>
    <property type="evidence" value="ECO:0000250"/>
    <property type="project" value="UniProtKB"/>
</dbReference>
<dbReference type="GO" id="GO:0001228">
    <property type="term" value="F:DNA-binding transcription activator activity, RNA polymerase II-specific"/>
    <property type="evidence" value="ECO:0000314"/>
    <property type="project" value="BHF-UCL"/>
</dbReference>
<dbReference type="GO" id="GO:0003700">
    <property type="term" value="F:DNA-binding transcription factor activity"/>
    <property type="evidence" value="ECO:0000314"/>
    <property type="project" value="UniProtKB"/>
</dbReference>
<dbReference type="GO" id="GO:0000981">
    <property type="term" value="F:DNA-binding transcription factor activity, RNA polymerase II-specific"/>
    <property type="evidence" value="ECO:0000314"/>
    <property type="project" value="BHF-UCL"/>
</dbReference>
<dbReference type="GO" id="GO:0042802">
    <property type="term" value="F:identical protein binding"/>
    <property type="evidence" value="ECO:0000353"/>
    <property type="project" value="IntAct"/>
</dbReference>
<dbReference type="GO" id="GO:0003676">
    <property type="term" value="F:nucleic acid binding"/>
    <property type="evidence" value="ECO:0000269"/>
    <property type="project" value="DisProt"/>
</dbReference>
<dbReference type="GO" id="GO:0000978">
    <property type="term" value="F:RNA polymerase II cis-regulatory region sequence-specific DNA binding"/>
    <property type="evidence" value="ECO:0000314"/>
    <property type="project" value="NTNU_SB"/>
</dbReference>
<dbReference type="GO" id="GO:0061629">
    <property type="term" value="F:RNA polymerase II-specific DNA-binding transcription factor binding"/>
    <property type="evidence" value="ECO:0000353"/>
    <property type="project" value="BHF-UCL"/>
</dbReference>
<dbReference type="GO" id="GO:0000976">
    <property type="term" value="F:transcription cis-regulatory region binding"/>
    <property type="evidence" value="ECO:0000314"/>
    <property type="project" value="ARUK-UCL"/>
</dbReference>
<dbReference type="GO" id="GO:0001222">
    <property type="term" value="F:transcription corepressor binding"/>
    <property type="evidence" value="ECO:0000314"/>
    <property type="project" value="UniProtKB"/>
</dbReference>
<dbReference type="GO" id="GO:0030154">
    <property type="term" value="P:cell differentiation"/>
    <property type="evidence" value="ECO:0000318"/>
    <property type="project" value="GO_Central"/>
</dbReference>
<dbReference type="GO" id="GO:0048870">
    <property type="term" value="P:cell motility"/>
    <property type="evidence" value="ECO:0000315"/>
    <property type="project" value="BHF-UCL"/>
</dbReference>
<dbReference type="GO" id="GO:0006955">
    <property type="term" value="P:immune response"/>
    <property type="evidence" value="ECO:0000304"/>
    <property type="project" value="ProtInc"/>
</dbReference>
<dbReference type="GO" id="GO:0045786">
    <property type="term" value="P:negative regulation of cell cycle"/>
    <property type="evidence" value="ECO:0000314"/>
    <property type="project" value="UniProtKB"/>
</dbReference>
<dbReference type="GO" id="GO:0008285">
    <property type="term" value="P:negative regulation of cell population proliferation"/>
    <property type="evidence" value="ECO:0000304"/>
    <property type="project" value="ProtInc"/>
</dbReference>
<dbReference type="GO" id="GO:0030578">
    <property type="term" value="P:PML body organization"/>
    <property type="evidence" value="ECO:0000314"/>
    <property type="project" value="BHF-UCL"/>
</dbReference>
<dbReference type="GO" id="GO:0045766">
    <property type="term" value="P:positive regulation of angiogenesis"/>
    <property type="evidence" value="ECO:0000315"/>
    <property type="project" value="BHF-UCL"/>
</dbReference>
<dbReference type="GO" id="GO:0043536">
    <property type="term" value="P:positive regulation of blood vessel endothelial cell migration"/>
    <property type="evidence" value="ECO:0000315"/>
    <property type="project" value="BHF-UCL"/>
</dbReference>
<dbReference type="GO" id="GO:0045893">
    <property type="term" value="P:positive regulation of DNA-templated transcription"/>
    <property type="evidence" value="ECO:0000314"/>
    <property type="project" value="UniProtKB"/>
</dbReference>
<dbReference type="GO" id="GO:0010595">
    <property type="term" value="P:positive regulation of endothelial cell migration"/>
    <property type="evidence" value="ECO:0000315"/>
    <property type="project" value="UniProtKB"/>
</dbReference>
<dbReference type="GO" id="GO:0045648">
    <property type="term" value="P:positive regulation of erythrocyte differentiation"/>
    <property type="evidence" value="ECO:0000314"/>
    <property type="project" value="UniProtKB"/>
</dbReference>
<dbReference type="GO" id="GO:0010628">
    <property type="term" value="P:positive regulation of gene expression"/>
    <property type="evidence" value="ECO:0000315"/>
    <property type="project" value="BHF-UCL"/>
</dbReference>
<dbReference type="GO" id="GO:0050729">
    <property type="term" value="P:positive regulation of inflammatory response"/>
    <property type="evidence" value="ECO:0000314"/>
    <property type="project" value="BHF-UCL"/>
</dbReference>
<dbReference type="GO" id="GO:1904996">
    <property type="term" value="P:positive regulation of leukocyte adhesion to vascular endothelial cell"/>
    <property type="evidence" value="ECO:0000315"/>
    <property type="project" value="BHF-UCL"/>
</dbReference>
<dbReference type="GO" id="GO:1902895">
    <property type="term" value="P:positive regulation of miRNA transcription"/>
    <property type="evidence" value="ECO:0000314"/>
    <property type="project" value="BHF-UCL"/>
</dbReference>
<dbReference type="GO" id="GO:0045944">
    <property type="term" value="P:positive regulation of transcription by RNA polymerase II"/>
    <property type="evidence" value="ECO:0000314"/>
    <property type="project" value="BHF-UCL"/>
</dbReference>
<dbReference type="GO" id="GO:0045765">
    <property type="term" value="P:regulation of angiogenesis"/>
    <property type="evidence" value="ECO:0000315"/>
    <property type="project" value="UniProtKB"/>
</dbReference>
<dbReference type="GO" id="GO:0042981">
    <property type="term" value="P:regulation of apoptotic process"/>
    <property type="evidence" value="ECO:0000314"/>
    <property type="project" value="UniProtKB"/>
</dbReference>
<dbReference type="GO" id="GO:0006357">
    <property type="term" value="P:regulation of transcription by RNA polymerase II"/>
    <property type="evidence" value="ECO:0000318"/>
    <property type="project" value="GO_Central"/>
</dbReference>
<dbReference type="GO" id="GO:0046677">
    <property type="term" value="P:response to antibiotic"/>
    <property type="evidence" value="ECO:0000314"/>
    <property type="project" value="UniProtKB"/>
</dbReference>
<dbReference type="GO" id="GO:0006366">
    <property type="term" value="P:transcription by RNA polymerase II"/>
    <property type="evidence" value="ECO:0000314"/>
    <property type="project" value="UniProtKB"/>
</dbReference>
<dbReference type="CDD" id="cd08542">
    <property type="entry name" value="SAM_PNT-ETS-1"/>
    <property type="match status" value="1"/>
</dbReference>
<dbReference type="DisProt" id="DP01441"/>
<dbReference type="FunFam" id="1.10.10.10:FF:000097">
    <property type="entry name" value="Protein c-ets-1 isoform 1"/>
    <property type="match status" value="1"/>
</dbReference>
<dbReference type="FunFam" id="1.10.150.50:FF:000014">
    <property type="entry name" value="Protein c-ets-1 isoform 1"/>
    <property type="match status" value="1"/>
</dbReference>
<dbReference type="Gene3D" id="1.10.150.50">
    <property type="entry name" value="Transcription Factor, Ets-1"/>
    <property type="match status" value="1"/>
</dbReference>
<dbReference type="Gene3D" id="1.10.10.10">
    <property type="entry name" value="Winged helix-like DNA-binding domain superfamily/Winged helix DNA-binding domain"/>
    <property type="match status" value="1"/>
</dbReference>
<dbReference type="IDEAL" id="IID00025"/>
<dbReference type="InterPro" id="IPR045688">
    <property type="entry name" value="Ets1_N_flank"/>
</dbReference>
<dbReference type="InterPro" id="IPR000418">
    <property type="entry name" value="Ets_dom"/>
</dbReference>
<dbReference type="InterPro" id="IPR046328">
    <property type="entry name" value="ETS_fam"/>
</dbReference>
<dbReference type="InterPro" id="IPR003118">
    <property type="entry name" value="Pointed_dom"/>
</dbReference>
<dbReference type="InterPro" id="IPR013761">
    <property type="entry name" value="SAM/pointed_sf"/>
</dbReference>
<dbReference type="InterPro" id="IPR041886">
    <property type="entry name" value="SAM_PNT-ETS-1"/>
</dbReference>
<dbReference type="InterPro" id="IPR016311">
    <property type="entry name" value="Transform_prot_C-ets"/>
</dbReference>
<dbReference type="InterPro" id="IPR036388">
    <property type="entry name" value="WH-like_DNA-bd_sf"/>
</dbReference>
<dbReference type="InterPro" id="IPR036390">
    <property type="entry name" value="WH_DNA-bd_sf"/>
</dbReference>
<dbReference type="PANTHER" id="PTHR11849">
    <property type="entry name" value="ETS"/>
    <property type="match status" value="1"/>
</dbReference>
<dbReference type="PANTHER" id="PTHR11849:SF209">
    <property type="entry name" value="ETS TRANSLOCATION VARIANT 2"/>
    <property type="match status" value="1"/>
</dbReference>
<dbReference type="Pfam" id="PF00178">
    <property type="entry name" value="Ets"/>
    <property type="match status" value="1"/>
</dbReference>
<dbReference type="Pfam" id="PF19525">
    <property type="entry name" value="Ets1_N_flank"/>
    <property type="match status" value="1"/>
</dbReference>
<dbReference type="Pfam" id="PF02198">
    <property type="entry name" value="SAM_PNT"/>
    <property type="match status" value="1"/>
</dbReference>
<dbReference type="PIRSF" id="PIRSF001698">
    <property type="entry name" value="Transforming_factor_C-ets"/>
    <property type="match status" value="1"/>
</dbReference>
<dbReference type="PRINTS" id="PR00454">
    <property type="entry name" value="ETSDOMAIN"/>
</dbReference>
<dbReference type="SMART" id="SM00413">
    <property type="entry name" value="ETS"/>
    <property type="match status" value="1"/>
</dbReference>
<dbReference type="SMART" id="SM00251">
    <property type="entry name" value="SAM_PNT"/>
    <property type="match status" value="1"/>
</dbReference>
<dbReference type="SUPFAM" id="SSF47769">
    <property type="entry name" value="SAM/Pointed domain"/>
    <property type="match status" value="1"/>
</dbReference>
<dbReference type="SUPFAM" id="SSF46785">
    <property type="entry name" value="Winged helix' DNA-binding domain"/>
    <property type="match status" value="1"/>
</dbReference>
<dbReference type="PROSITE" id="PS00345">
    <property type="entry name" value="ETS_DOMAIN_1"/>
    <property type="match status" value="1"/>
</dbReference>
<dbReference type="PROSITE" id="PS00346">
    <property type="entry name" value="ETS_DOMAIN_2"/>
    <property type="match status" value="1"/>
</dbReference>
<dbReference type="PROSITE" id="PS50061">
    <property type="entry name" value="ETS_DOMAIN_3"/>
    <property type="match status" value="1"/>
</dbReference>
<dbReference type="PROSITE" id="PS51433">
    <property type="entry name" value="PNT"/>
    <property type="match status" value="1"/>
</dbReference>
<keyword id="KW-0002">3D-structure</keyword>
<keyword id="KW-0007">Acetylation</keyword>
<keyword id="KW-0025">Alternative splicing</keyword>
<keyword id="KW-0963">Cytoplasm</keyword>
<keyword id="KW-0238">DNA-binding</keyword>
<keyword id="KW-0391">Immunity</keyword>
<keyword id="KW-1017">Isopeptide bond</keyword>
<keyword id="KW-0539">Nucleus</keyword>
<keyword id="KW-0597">Phosphoprotein</keyword>
<keyword id="KW-1267">Proteomics identification</keyword>
<keyword id="KW-0656">Proto-oncogene</keyword>
<keyword id="KW-1185">Reference proteome</keyword>
<keyword id="KW-0804">Transcription</keyword>
<keyword id="KW-0805">Transcription regulation</keyword>
<keyword id="KW-0832">Ubl conjugation</keyword>
<accession>P14921</accession>
<accession>A9UL17</accession>
<accession>F5GYX9</accession>
<accession>Q14278</accession>
<accession>Q16080</accession>
<accession>Q6N087</accession>
<accession>Q96AC5</accession>
<sequence>MKAAVDLKPTLTIIKTEKVDLELFPSPDMECADVPLLTPSSKEMMSQALKATFSGFTKEQQRLGIPKDPRQWTETHVRDWVMWAVNEFSLKGVDFQKFCMNGAALCALGKDCFLELAPDFVGDILWEHLEILQKEDVKPYQVNGVNPAYPESRYTSDYFISYGIEHAQCVPPSEFSEPSFITESYQTLHPISSEELLSLKYENDYPSVILRDPLQTDTLQNDYFAIKQEVVTPDNMCMGRTSRGKLGGQDSFESIESYDSCDRLTQSWSSQSSFNSLQRVPSYDSFDSEDYPAALPNHKPKGTFKDYVRDRADLNKDKPVIPAAALAGYTGSGPIQLWQFLLELLTDKSCQSFISWTGDGWEFKLSDPDEVARRWGKRKNKPKMNYEKLSRGLRYYYDKNIIHKTAGKRYVYRFVCDLQSLLGYTPEELHAMLDVKPDADE</sequence>
<proteinExistence type="evidence at protein level"/>
<gene>
    <name type="primary">ETS1</name>
    <name type="synonym">EWSR2</name>
</gene>